<accession>Q0BND2</accession>
<sequence>MSFLVAIVGRANVGKSTLFNVLTNSHDALVFDFEGVTRDRQYGQAKYDDLDYLVVDTGGISDKDVGFDEFMAKQSQIAIDEANLVFFVVDGRSGLTTGDEYVASLLRQKDKKVVVVVNKVDGTDEEAAMAEFYSFGFDKVFAISAAHRRNTQKLVDKFLKKPLNEYYQDYTQTQEHKEQQRHGIHFSLIGRPNVGKSTLTNRMLGEDRVVVFDMPGTTIDSVSIPFERHGQKYTIVDTAGVRKRGKVKQTLEKFSVIKTLQAIQDSNVVVAVVDARQGISDQDLSLIHFAIKNGRALVLAVNKWDGMTEEDRIQVKQDLKRKLFFLQDYVDIHFISALYGTNVGHVFESIDTAYACANKKITTADATRLMQLAVEAHSPPMVGKFRIKLKYAHVGGHNPPVIVIHGNQVSRLPNSYKRYLENFFREALDFRGTPIVFEFKQSENPFADRKNKRSKDEGSKSKKVK</sequence>
<keyword id="KW-0342">GTP-binding</keyword>
<keyword id="KW-0547">Nucleotide-binding</keyword>
<keyword id="KW-0677">Repeat</keyword>
<keyword id="KW-0690">Ribosome biogenesis</keyword>
<protein>
    <recommendedName>
        <fullName evidence="1">GTPase Der</fullName>
    </recommendedName>
    <alternativeName>
        <fullName evidence="1">GTP-binding protein EngA</fullName>
    </alternativeName>
</protein>
<name>DER_FRATO</name>
<proteinExistence type="inferred from homology"/>
<evidence type="ECO:0000255" key="1">
    <source>
        <dbReference type="HAMAP-Rule" id="MF_00195"/>
    </source>
</evidence>
<evidence type="ECO:0000256" key="2">
    <source>
        <dbReference type="SAM" id="MobiDB-lite"/>
    </source>
</evidence>
<comment type="function">
    <text evidence="1">GTPase that plays an essential role in the late steps of ribosome biogenesis.</text>
</comment>
<comment type="subunit">
    <text evidence="1">Associates with the 50S ribosomal subunit.</text>
</comment>
<comment type="similarity">
    <text evidence="1">Belongs to the TRAFAC class TrmE-Era-EngA-EngB-Septin-like GTPase superfamily. EngA (Der) GTPase family.</text>
</comment>
<reference key="1">
    <citation type="journal article" date="2006" name="J. Bacteriol.">
        <title>Chromosome rearrangement and diversification of Francisella tularensis revealed by the type B (OSU18) genome sequence.</title>
        <authorList>
            <person name="Petrosino J.F."/>
            <person name="Xiang Q."/>
            <person name="Karpathy S.E."/>
            <person name="Jiang H."/>
            <person name="Yerrapragada S."/>
            <person name="Liu Y."/>
            <person name="Gioia J."/>
            <person name="Hemphill L."/>
            <person name="Gonzalez A."/>
            <person name="Raghavan T.M."/>
            <person name="Uzman A."/>
            <person name="Fox G.E."/>
            <person name="Highlander S."/>
            <person name="Reichard M."/>
            <person name="Morton R.J."/>
            <person name="Clinkenbeard K.D."/>
            <person name="Weinstock G.M."/>
        </authorList>
    </citation>
    <scope>NUCLEOTIDE SEQUENCE [LARGE SCALE GENOMIC DNA]</scope>
    <source>
        <strain>OSU18</strain>
    </source>
</reference>
<feature type="chain" id="PRO_1000011627" description="GTPase Der">
    <location>
        <begin position="1"/>
        <end position="465"/>
    </location>
</feature>
<feature type="domain" description="EngA-type G 1">
    <location>
        <begin position="3"/>
        <end position="166"/>
    </location>
</feature>
<feature type="domain" description="EngA-type G 2">
    <location>
        <begin position="184"/>
        <end position="358"/>
    </location>
</feature>
<feature type="domain" description="KH-like" evidence="1">
    <location>
        <begin position="359"/>
        <end position="443"/>
    </location>
</feature>
<feature type="region of interest" description="Disordered" evidence="2">
    <location>
        <begin position="446"/>
        <end position="465"/>
    </location>
</feature>
<feature type="binding site" evidence="1">
    <location>
        <begin position="9"/>
        <end position="16"/>
    </location>
    <ligand>
        <name>GTP</name>
        <dbReference type="ChEBI" id="CHEBI:37565"/>
        <label>1</label>
    </ligand>
</feature>
<feature type="binding site" evidence="1">
    <location>
        <begin position="56"/>
        <end position="60"/>
    </location>
    <ligand>
        <name>GTP</name>
        <dbReference type="ChEBI" id="CHEBI:37565"/>
        <label>1</label>
    </ligand>
</feature>
<feature type="binding site" evidence="1">
    <location>
        <begin position="118"/>
        <end position="121"/>
    </location>
    <ligand>
        <name>GTP</name>
        <dbReference type="ChEBI" id="CHEBI:37565"/>
        <label>1</label>
    </ligand>
</feature>
<feature type="binding site" evidence="1">
    <location>
        <begin position="190"/>
        <end position="197"/>
    </location>
    <ligand>
        <name>GTP</name>
        <dbReference type="ChEBI" id="CHEBI:37565"/>
        <label>2</label>
    </ligand>
</feature>
<feature type="binding site" evidence="1">
    <location>
        <begin position="237"/>
        <end position="241"/>
    </location>
    <ligand>
        <name>GTP</name>
        <dbReference type="ChEBI" id="CHEBI:37565"/>
        <label>2</label>
    </ligand>
</feature>
<feature type="binding site" evidence="1">
    <location>
        <begin position="302"/>
        <end position="305"/>
    </location>
    <ligand>
        <name>GTP</name>
        <dbReference type="ChEBI" id="CHEBI:37565"/>
        <label>2</label>
    </ligand>
</feature>
<organism>
    <name type="scientific">Francisella tularensis subsp. holarctica (strain OSU18)</name>
    <dbReference type="NCBI Taxonomy" id="393011"/>
    <lineage>
        <taxon>Bacteria</taxon>
        <taxon>Pseudomonadati</taxon>
        <taxon>Pseudomonadota</taxon>
        <taxon>Gammaproteobacteria</taxon>
        <taxon>Thiotrichales</taxon>
        <taxon>Francisellaceae</taxon>
        <taxon>Francisella</taxon>
    </lineage>
</organism>
<gene>
    <name evidence="1" type="primary">der</name>
    <name type="synonym">engA</name>
    <name type="ordered locus">FTH_0407</name>
</gene>
<dbReference type="EMBL" id="CP000437">
    <property type="protein sequence ID" value="ABI82402.1"/>
    <property type="molecule type" value="Genomic_DNA"/>
</dbReference>
<dbReference type="RefSeq" id="WP_003014664.1">
    <property type="nucleotide sequence ID" value="NC_017463.1"/>
</dbReference>
<dbReference type="SMR" id="Q0BND2"/>
<dbReference type="KEGG" id="fth:FTH_0407"/>
<dbReference type="GO" id="GO:0005525">
    <property type="term" value="F:GTP binding"/>
    <property type="evidence" value="ECO:0007669"/>
    <property type="project" value="UniProtKB-UniRule"/>
</dbReference>
<dbReference type="GO" id="GO:0043022">
    <property type="term" value="F:ribosome binding"/>
    <property type="evidence" value="ECO:0007669"/>
    <property type="project" value="TreeGrafter"/>
</dbReference>
<dbReference type="GO" id="GO:0042254">
    <property type="term" value="P:ribosome biogenesis"/>
    <property type="evidence" value="ECO:0007669"/>
    <property type="project" value="UniProtKB-KW"/>
</dbReference>
<dbReference type="CDD" id="cd01894">
    <property type="entry name" value="EngA1"/>
    <property type="match status" value="1"/>
</dbReference>
<dbReference type="CDD" id="cd01895">
    <property type="entry name" value="EngA2"/>
    <property type="match status" value="1"/>
</dbReference>
<dbReference type="FunFam" id="3.30.300.20:FF:000004">
    <property type="entry name" value="GTPase Der"/>
    <property type="match status" value="1"/>
</dbReference>
<dbReference type="FunFam" id="3.40.50.300:FF:000040">
    <property type="entry name" value="GTPase Der"/>
    <property type="match status" value="1"/>
</dbReference>
<dbReference type="FunFam" id="3.40.50.300:FF:000057">
    <property type="entry name" value="GTPase Der"/>
    <property type="match status" value="1"/>
</dbReference>
<dbReference type="Gene3D" id="3.30.300.20">
    <property type="match status" value="1"/>
</dbReference>
<dbReference type="Gene3D" id="3.40.50.300">
    <property type="entry name" value="P-loop containing nucleotide triphosphate hydrolases"/>
    <property type="match status" value="2"/>
</dbReference>
<dbReference type="HAMAP" id="MF_00195">
    <property type="entry name" value="GTPase_Der"/>
    <property type="match status" value="1"/>
</dbReference>
<dbReference type="InterPro" id="IPR031166">
    <property type="entry name" value="G_ENGA"/>
</dbReference>
<dbReference type="InterPro" id="IPR006073">
    <property type="entry name" value="GTP-bd"/>
</dbReference>
<dbReference type="InterPro" id="IPR016484">
    <property type="entry name" value="GTPase_Der"/>
</dbReference>
<dbReference type="InterPro" id="IPR032859">
    <property type="entry name" value="KH_dom-like"/>
</dbReference>
<dbReference type="InterPro" id="IPR015946">
    <property type="entry name" value="KH_dom-like_a/b"/>
</dbReference>
<dbReference type="InterPro" id="IPR027417">
    <property type="entry name" value="P-loop_NTPase"/>
</dbReference>
<dbReference type="InterPro" id="IPR005225">
    <property type="entry name" value="Small_GTP-bd"/>
</dbReference>
<dbReference type="NCBIfam" id="TIGR03594">
    <property type="entry name" value="GTPase_EngA"/>
    <property type="match status" value="1"/>
</dbReference>
<dbReference type="NCBIfam" id="TIGR00231">
    <property type="entry name" value="small_GTP"/>
    <property type="match status" value="2"/>
</dbReference>
<dbReference type="PANTHER" id="PTHR43834">
    <property type="entry name" value="GTPASE DER"/>
    <property type="match status" value="1"/>
</dbReference>
<dbReference type="PANTHER" id="PTHR43834:SF6">
    <property type="entry name" value="GTPASE DER"/>
    <property type="match status" value="1"/>
</dbReference>
<dbReference type="Pfam" id="PF14714">
    <property type="entry name" value="KH_dom-like"/>
    <property type="match status" value="1"/>
</dbReference>
<dbReference type="Pfam" id="PF01926">
    <property type="entry name" value="MMR_HSR1"/>
    <property type="match status" value="2"/>
</dbReference>
<dbReference type="PIRSF" id="PIRSF006485">
    <property type="entry name" value="GTP-binding_EngA"/>
    <property type="match status" value="1"/>
</dbReference>
<dbReference type="PRINTS" id="PR00326">
    <property type="entry name" value="GTP1OBG"/>
</dbReference>
<dbReference type="SUPFAM" id="SSF52540">
    <property type="entry name" value="P-loop containing nucleoside triphosphate hydrolases"/>
    <property type="match status" value="2"/>
</dbReference>
<dbReference type="PROSITE" id="PS51712">
    <property type="entry name" value="G_ENGA"/>
    <property type="match status" value="2"/>
</dbReference>